<comment type="similarity">
    <text evidence="2">Belongs to the BICDR family.</text>
</comment>
<feature type="chain" id="PRO_0000302863" description="BICD family-like cargo adapter 2">
    <location>
        <begin position="1"/>
        <end position="493"/>
    </location>
</feature>
<feature type="coiled-coil region" evidence="1">
    <location>
        <begin position="56"/>
        <end position="275"/>
    </location>
</feature>
<feature type="coiled-coil region" evidence="1">
    <location>
        <begin position="365"/>
        <end position="431"/>
    </location>
</feature>
<dbReference type="EMBL" id="BC074321">
    <property type="protein sequence ID" value="AAH74321.1"/>
    <property type="molecule type" value="mRNA"/>
</dbReference>
<dbReference type="RefSeq" id="NP_001086203.1">
    <property type="nucleotide sequence ID" value="NM_001092734.1"/>
</dbReference>
<dbReference type="SMR" id="Q6GLX3"/>
<dbReference type="DNASU" id="444632"/>
<dbReference type="GeneID" id="444632"/>
<dbReference type="KEGG" id="xla:444632"/>
<dbReference type="AGR" id="Xenbase:XB-GENE-5747731"/>
<dbReference type="CTD" id="444632"/>
<dbReference type="Xenbase" id="XB-GENE-5747731">
    <property type="gene designation" value="bicdl2.S"/>
</dbReference>
<dbReference type="OrthoDB" id="9451547at2759"/>
<dbReference type="Proteomes" id="UP000186698">
    <property type="component" value="Chromosome 9_10S"/>
</dbReference>
<dbReference type="Bgee" id="444632">
    <property type="expression patterns" value="Expressed in zone of skin and 7 other cell types or tissues"/>
</dbReference>
<dbReference type="GO" id="GO:0005737">
    <property type="term" value="C:cytoplasm"/>
    <property type="evidence" value="ECO:0007669"/>
    <property type="project" value="GOC"/>
</dbReference>
<dbReference type="GO" id="GO:0055107">
    <property type="term" value="P:Golgi to secretory granule transport"/>
    <property type="evidence" value="ECO:0000318"/>
    <property type="project" value="GO_Central"/>
</dbReference>
<dbReference type="GO" id="GO:0047496">
    <property type="term" value="P:vesicle transport along microtubule"/>
    <property type="evidence" value="ECO:0000318"/>
    <property type="project" value="GO_Central"/>
</dbReference>
<dbReference type="InterPro" id="IPR051149">
    <property type="entry name" value="Spindly/BICDR_Dynein_Adapter"/>
</dbReference>
<dbReference type="PANTHER" id="PTHR32123">
    <property type="entry name" value="BICD FAMILY-LIKE CARGO ADAPTER"/>
    <property type="match status" value="1"/>
</dbReference>
<dbReference type="PANTHER" id="PTHR32123:SF11">
    <property type="entry name" value="BICD FAMILY-LIKE CARGO ADAPTER 2-RELATED"/>
    <property type="match status" value="1"/>
</dbReference>
<sequence length="493" mass="57478">MGWNGGLTSPSMEEHFYPFLIERRPSYMEEDEEEHEDEDLSLVLEKKDKDLLLAAELGKALLERNDQLMKAKDALEEELRETLETIEQEKHDMRLKMEVQESEWRAQVADLESDLAEARLQMQQLLSEQRECGRESASAAQELSEQNQRLVEQLAQASQVEQALNMELKSLREENRDLTISRGQFAPCLQSLRSENVLLLENKKEMESQTKQLQDENDNVQNQLISAKEGIFHLQRQKKDAELQVQQLQLEAQKLRDSQRTLQLQVKELQEELHMRDSQFSTHFSLHSEIQQSTAGQDHEMTTEAFPGLPCLPPSPYNLQKMGRNSVETQSITSDYMDTYLTEREGDLLRDSEEETIRLQDKVTMQHVELTTLQEEVQRLQDLLQQNNLDSIAKQAVLDRDEALMKKGELEQELARCQMEKESLNLQLLSTIQQKVMLSQELEAWQDDMQIVINQQLQSQKQQETQKVPETPQNSFMRRDSKQGRIFSFFKNI</sequence>
<organism>
    <name type="scientific">Xenopus laevis</name>
    <name type="common">African clawed frog</name>
    <dbReference type="NCBI Taxonomy" id="8355"/>
    <lineage>
        <taxon>Eukaryota</taxon>
        <taxon>Metazoa</taxon>
        <taxon>Chordata</taxon>
        <taxon>Craniata</taxon>
        <taxon>Vertebrata</taxon>
        <taxon>Euteleostomi</taxon>
        <taxon>Amphibia</taxon>
        <taxon>Batrachia</taxon>
        <taxon>Anura</taxon>
        <taxon>Pipoidea</taxon>
        <taxon>Pipidae</taxon>
        <taxon>Xenopodinae</taxon>
        <taxon>Xenopus</taxon>
        <taxon>Xenopus</taxon>
    </lineage>
</organism>
<reference key="1">
    <citation type="submission" date="2004-06" db="EMBL/GenBank/DDBJ databases">
        <authorList>
            <consortium name="NIH - Xenopus Gene Collection (XGC) project"/>
        </authorList>
    </citation>
    <scope>NUCLEOTIDE SEQUENCE [LARGE SCALE MRNA]</scope>
    <source>
        <tissue>Brain</tissue>
    </source>
</reference>
<evidence type="ECO:0000255" key="1"/>
<evidence type="ECO:0000305" key="2"/>
<protein>
    <recommendedName>
        <fullName>BICD family-like cargo adapter 2</fullName>
    </recommendedName>
    <alternativeName>
        <fullName>Bicaudal D-related protein 2</fullName>
        <shortName>BICD-related protein 2</shortName>
        <shortName>BICDR-2</shortName>
    </alternativeName>
    <alternativeName>
        <fullName>Coiled-coil domain-containing protein 64B</fullName>
    </alternativeName>
</protein>
<proteinExistence type="evidence at transcript level"/>
<name>BICL2_XENLA</name>
<accession>Q6GLX3</accession>
<gene>
    <name type="primary">bicdl2</name>
    <name type="synonym">bicdr2</name>
    <name type="synonym">ccdc64b</name>
</gene>
<keyword id="KW-0175">Coiled coil</keyword>
<keyword id="KW-1185">Reference proteome</keyword>